<keyword id="KW-0028">Amino-acid biosynthesis</keyword>
<keyword id="KW-0100">Branched-chain amino acid biosynthesis</keyword>
<keyword id="KW-0460">Magnesium</keyword>
<keyword id="KW-0479">Metal-binding</keyword>
<keyword id="KW-0521">NADP</keyword>
<keyword id="KW-0560">Oxidoreductase</keyword>
<keyword id="KW-1185">Reference proteome</keyword>
<sequence length="330" mass="35482">MVEIYYDDDASLDVLAGRKVAVIGYGSQGHAHALNLRDSGVDVRVGLPADSRSRAKAAEEGLRVLTPAEASAEADIIMLLTPDTTHRKIYADSIAPHLSEGKALAFGHGFNIRYGLIEPPAGVDVFMVAPKGPGHLVRRVFEEGKGVPVLVAVENDASGNALAVALAYAKGIGGTRAGALRTTFTEETETDLFGEQAVLCGGASALVQAGFETLVEAGYTPEVAYFECLHELKLIVDLMYEGGISQMRYSISDTAEYGDVTRGPRVVTPAVKAEMRKILDEIRDGTFAREWVAEDDNGRPNFTKLVEEGKQHPIEQVGAKLRPLMSWIAK</sequence>
<name>ILVC_FRAAA</name>
<reference key="1">
    <citation type="journal article" date="2007" name="Genome Res.">
        <title>Genome characteristics of facultatively symbiotic Frankia sp. strains reflect host range and host plant biogeography.</title>
        <authorList>
            <person name="Normand P."/>
            <person name="Lapierre P."/>
            <person name="Tisa L.S."/>
            <person name="Gogarten J.P."/>
            <person name="Alloisio N."/>
            <person name="Bagnarol E."/>
            <person name="Bassi C.A."/>
            <person name="Berry A.M."/>
            <person name="Bickhart D.M."/>
            <person name="Choisne N."/>
            <person name="Couloux A."/>
            <person name="Cournoyer B."/>
            <person name="Cruveiller S."/>
            <person name="Daubin V."/>
            <person name="Demange N."/>
            <person name="Francino M.P."/>
            <person name="Goltsman E."/>
            <person name="Huang Y."/>
            <person name="Kopp O.R."/>
            <person name="Labarre L."/>
            <person name="Lapidus A."/>
            <person name="Lavire C."/>
            <person name="Marechal J."/>
            <person name="Martinez M."/>
            <person name="Mastronunzio J.E."/>
            <person name="Mullin B.C."/>
            <person name="Niemann J."/>
            <person name="Pujic P."/>
            <person name="Rawnsley T."/>
            <person name="Rouy Z."/>
            <person name="Schenowitz C."/>
            <person name="Sellstedt A."/>
            <person name="Tavares F."/>
            <person name="Tomkins J.P."/>
            <person name="Vallenet D."/>
            <person name="Valverde C."/>
            <person name="Wall L.G."/>
            <person name="Wang Y."/>
            <person name="Medigue C."/>
            <person name="Benson D.R."/>
        </authorList>
    </citation>
    <scope>NUCLEOTIDE SEQUENCE [LARGE SCALE GENOMIC DNA]</scope>
    <source>
        <strain>DSM 45986 / CECT 9034 / ACN14a</strain>
    </source>
</reference>
<comment type="function">
    <text evidence="1">Involved in the biosynthesis of branched-chain amino acids (BCAA). Catalyzes an alkyl-migration followed by a ketol-acid reduction of (S)-2-acetolactate (S2AL) to yield (R)-2,3-dihydroxy-isovalerate. In the isomerase reaction, S2AL is rearranged via a Mg-dependent methyl migration to produce 3-hydroxy-3-methyl-2-ketobutyrate (HMKB). In the reductase reaction, this 2-ketoacid undergoes a metal-dependent reduction by NADPH to yield (R)-2,3-dihydroxy-isovalerate.</text>
</comment>
<comment type="catalytic activity">
    <reaction evidence="1">
        <text>(2R)-2,3-dihydroxy-3-methylbutanoate + NADP(+) = (2S)-2-acetolactate + NADPH + H(+)</text>
        <dbReference type="Rhea" id="RHEA:22068"/>
        <dbReference type="ChEBI" id="CHEBI:15378"/>
        <dbReference type="ChEBI" id="CHEBI:49072"/>
        <dbReference type="ChEBI" id="CHEBI:57783"/>
        <dbReference type="ChEBI" id="CHEBI:58349"/>
        <dbReference type="ChEBI" id="CHEBI:58476"/>
        <dbReference type="EC" id="1.1.1.86"/>
    </reaction>
</comment>
<comment type="catalytic activity">
    <reaction evidence="1">
        <text>(2R,3R)-2,3-dihydroxy-3-methylpentanoate + NADP(+) = (S)-2-ethyl-2-hydroxy-3-oxobutanoate + NADPH + H(+)</text>
        <dbReference type="Rhea" id="RHEA:13493"/>
        <dbReference type="ChEBI" id="CHEBI:15378"/>
        <dbReference type="ChEBI" id="CHEBI:49256"/>
        <dbReference type="ChEBI" id="CHEBI:49258"/>
        <dbReference type="ChEBI" id="CHEBI:57783"/>
        <dbReference type="ChEBI" id="CHEBI:58349"/>
        <dbReference type="EC" id="1.1.1.86"/>
    </reaction>
</comment>
<comment type="cofactor">
    <cofactor evidence="1">
        <name>Mg(2+)</name>
        <dbReference type="ChEBI" id="CHEBI:18420"/>
    </cofactor>
    <text evidence="1">Binds 2 magnesium ions per subunit.</text>
</comment>
<comment type="pathway">
    <text evidence="1">Amino-acid biosynthesis; L-isoleucine biosynthesis; L-isoleucine from 2-oxobutanoate: step 2/4.</text>
</comment>
<comment type="pathway">
    <text evidence="1">Amino-acid biosynthesis; L-valine biosynthesis; L-valine from pyruvate: step 2/4.</text>
</comment>
<comment type="similarity">
    <text evidence="1">Belongs to the ketol-acid reductoisomerase family.</text>
</comment>
<evidence type="ECO:0000255" key="1">
    <source>
        <dbReference type="HAMAP-Rule" id="MF_00435"/>
    </source>
</evidence>
<evidence type="ECO:0000255" key="2">
    <source>
        <dbReference type="PROSITE-ProRule" id="PRU01197"/>
    </source>
</evidence>
<evidence type="ECO:0000255" key="3">
    <source>
        <dbReference type="PROSITE-ProRule" id="PRU01198"/>
    </source>
</evidence>
<proteinExistence type="inferred from homology"/>
<feature type="chain" id="PRO_1000050509" description="Ketol-acid reductoisomerase (NADP(+))">
    <location>
        <begin position="1"/>
        <end position="330"/>
    </location>
</feature>
<feature type="domain" description="KARI N-terminal Rossmann" evidence="2">
    <location>
        <begin position="2"/>
        <end position="182"/>
    </location>
</feature>
<feature type="domain" description="KARI C-terminal knotted" evidence="3">
    <location>
        <begin position="183"/>
        <end position="328"/>
    </location>
</feature>
<feature type="active site" evidence="1">
    <location>
        <position position="108"/>
    </location>
</feature>
<feature type="binding site" evidence="1">
    <location>
        <begin position="25"/>
        <end position="28"/>
    </location>
    <ligand>
        <name>NADP(+)</name>
        <dbReference type="ChEBI" id="CHEBI:58349"/>
    </ligand>
</feature>
<feature type="binding site" evidence="1">
    <location>
        <position position="51"/>
    </location>
    <ligand>
        <name>NADP(+)</name>
        <dbReference type="ChEBI" id="CHEBI:58349"/>
    </ligand>
</feature>
<feature type="binding site" evidence="1">
    <location>
        <position position="53"/>
    </location>
    <ligand>
        <name>NADP(+)</name>
        <dbReference type="ChEBI" id="CHEBI:58349"/>
    </ligand>
</feature>
<feature type="binding site" evidence="1">
    <location>
        <position position="134"/>
    </location>
    <ligand>
        <name>NADP(+)</name>
        <dbReference type="ChEBI" id="CHEBI:58349"/>
    </ligand>
</feature>
<feature type="binding site" evidence="1">
    <location>
        <position position="191"/>
    </location>
    <ligand>
        <name>Mg(2+)</name>
        <dbReference type="ChEBI" id="CHEBI:18420"/>
        <label>1</label>
    </ligand>
</feature>
<feature type="binding site" evidence="1">
    <location>
        <position position="191"/>
    </location>
    <ligand>
        <name>Mg(2+)</name>
        <dbReference type="ChEBI" id="CHEBI:18420"/>
        <label>2</label>
    </ligand>
</feature>
<feature type="binding site" evidence="1">
    <location>
        <position position="195"/>
    </location>
    <ligand>
        <name>Mg(2+)</name>
        <dbReference type="ChEBI" id="CHEBI:18420"/>
        <label>1</label>
    </ligand>
</feature>
<feature type="binding site" evidence="1">
    <location>
        <position position="227"/>
    </location>
    <ligand>
        <name>Mg(2+)</name>
        <dbReference type="ChEBI" id="CHEBI:18420"/>
        <label>2</label>
    </ligand>
</feature>
<feature type="binding site" evidence="1">
    <location>
        <position position="231"/>
    </location>
    <ligand>
        <name>Mg(2+)</name>
        <dbReference type="ChEBI" id="CHEBI:18420"/>
        <label>2</label>
    </ligand>
</feature>
<feature type="binding site" evidence="1">
    <location>
        <position position="252"/>
    </location>
    <ligand>
        <name>substrate</name>
    </ligand>
</feature>
<gene>
    <name evidence="1" type="primary">ilvC</name>
    <name type="ordered locus">FRAAL5849</name>
</gene>
<dbReference type="EC" id="1.1.1.86" evidence="1"/>
<dbReference type="EMBL" id="CT573213">
    <property type="protein sequence ID" value="CAJ64481.1"/>
    <property type="molecule type" value="Genomic_DNA"/>
</dbReference>
<dbReference type="RefSeq" id="WP_011606916.1">
    <property type="nucleotide sequence ID" value="NC_008278.1"/>
</dbReference>
<dbReference type="SMR" id="Q0RDI8"/>
<dbReference type="STRING" id="326424.FRAAL5849"/>
<dbReference type="KEGG" id="fal:FRAAL5849"/>
<dbReference type="eggNOG" id="COG0059">
    <property type="taxonomic scope" value="Bacteria"/>
</dbReference>
<dbReference type="HOGENOM" id="CLU_033821_0_1_11"/>
<dbReference type="OrthoDB" id="9804088at2"/>
<dbReference type="UniPathway" id="UPA00047">
    <property type="reaction ID" value="UER00056"/>
</dbReference>
<dbReference type="UniPathway" id="UPA00049">
    <property type="reaction ID" value="UER00060"/>
</dbReference>
<dbReference type="Proteomes" id="UP000000657">
    <property type="component" value="Chromosome"/>
</dbReference>
<dbReference type="GO" id="GO:0005829">
    <property type="term" value="C:cytosol"/>
    <property type="evidence" value="ECO:0007669"/>
    <property type="project" value="TreeGrafter"/>
</dbReference>
<dbReference type="GO" id="GO:0004455">
    <property type="term" value="F:ketol-acid reductoisomerase activity"/>
    <property type="evidence" value="ECO:0007669"/>
    <property type="project" value="UniProtKB-UniRule"/>
</dbReference>
<dbReference type="GO" id="GO:0000287">
    <property type="term" value="F:magnesium ion binding"/>
    <property type="evidence" value="ECO:0007669"/>
    <property type="project" value="UniProtKB-UniRule"/>
</dbReference>
<dbReference type="GO" id="GO:0050661">
    <property type="term" value="F:NADP binding"/>
    <property type="evidence" value="ECO:0007669"/>
    <property type="project" value="InterPro"/>
</dbReference>
<dbReference type="GO" id="GO:0009097">
    <property type="term" value="P:isoleucine biosynthetic process"/>
    <property type="evidence" value="ECO:0007669"/>
    <property type="project" value="UniProtKB-UniRule"/>
</dbReference>
<dbReference type="GO" id="GO:0009099">
    <property type="term" value="P:L-valine biosynthetic process"/>
    <property type="evidence" value="ECO:0007669"/>
    <property type="project" value="UniProtKB-UniRule"/>
</dbReference>
<dbReference type="FunFam" id="3.40.50.720:FF:000023">
    <property type="entry name" value="Ketol-acid reductoisomerase (NADP(+))"/>
    <property type="match status" value="1"/>
</dbReference>
<dbReference type="Gene3D" id="6.10.240.10">
    <property type="match status" value="1"/>
</dbReference>
<dbReference type="Gene3D" id="3.40.50.720">
    <property type="entry name" value="NAD(P)-binding Rossmann-like Domain"/>
    <property type="match status" value="1"/>
</dbReference>
<dbReference type="HAMAP" id="MF_00435">
    <property type="entry name" value="IlvC"/>
    <property type="match status" value="1"/>
</dbReference>
<dbReference type="InterPro" id="IPR008927">
    <property type="entry name" value="6-PGluconate_DH-like_C_sf"/>
</dbReference>
<dbReference type="InterPro" id="IPR013023">
    <property type="entry name" value="KARI"/>
</dbReference>
<dbReference type="InterPro" id="IPR000506">
    <property type="entry name" value="KARI_C"/>
</dbReference>
<dbReference type="InterPro" id="IPR013116">
    <property type="entry name" value="KARI_N"/>
</dbReference>
<dbReference type="InterPro" id="IPR014359">
    <property type="entry name" value="KARI_prok"/>
</dbReference>
<dbReference type="InterPro" id="IPR036291">
    <property type="entry name" value="NAD(P)-bd_dom_sf"/>
</dbReference>
<dbReference type="NCBIfam" id="TIGR00465">
    <property type="entry name" value="ilvC"/>
    <property type="match status" value="1"/>
</dbReference>
<dbReference type="NCBIfam" id="NF004017">
    <property type="entry name" value="PRK05479.1"/>
    <property type="match status" value="1"/>
</dbReference>
<dbReference type="NCBIfam" id="NF009940">
    <property type="entry name" value="PRK13403.1"/>
    <property type="match status" value="1"/>
</dbReference>
<dbReference type="PANTHER" id="PTHR21371">
    <property type="entry name" value="KETOL-ACID REDUCTOISOMERASE, MITOCHONDRIAL"/>
    <property type="match status" value="1"/>
</dbReference>
<dbReference type="PANTHER" id="PTHR21371:SF1">
    <property type="entry name" value="KETOL-ACID REDUCTOISOMERASE, MITOCHONDRIAL"/>
    <property type="match status" value="1"/>
</dbReference>
<dbReference type="Pfam" id="PF01450">
    <property type="entry name" value="KARI_C"/>
    <property type="match status" value="1"/>
</dbReference>
<dbReference type="Pfam" id="PF07991">
    <property type="entry name" value="KARI_N"/>
    <property type="match status" value="1"/>
</dbReference>
<dbReference type="PIRSF" id="PIRSF000116">
    <property type="entry name" value="IlvC_gammaproteo"/>
    <property type="match status" value="1"/>
</dbReference>
<dbReference type="SUPFAM" id="SSF48179">
    <property type="entry name" value="6-phosphogluconate dehydrogenase C-terminal domain-like"/>
    <property type="match status" value="1"/>
</dbReference>
<dbReference type="SUPFAM" id="SSF51735">
    <property type="entry name" value="NAD(P)-binding Rossmann-fold domains"/>
    <property type="match status" value="1"/>
</dbReference>
<dbReference type="PROSITE" id="PS51851">
    <property type="entry name" value="KARI_C"/>
    <property type="match status" value="1"/>
</dbReference>
<dbReference type="PROSITE" id="PS51850">
    <property type="entry name" value="KARI_N"/>
    <property type="match status" value="1"/>
</dbReference>
<organism>
    <name type="scientific">Frankia alni (strain DSM 45986 / CECT 9034 / ACN14a)</name>
    <dbReference type="NCBI Taxonomy" id="326424"/>
    <lineage>
        <taxon>Bacteria</taxon>
        <taxon>Bacillati</taxon>
        <taxon>Actinomycetota</taxon>
        <taxon>Actinomycetes</taxon>
        <taxon>Frankiales</taxon>
        <taxon>Frankiaceae</taxon>
        <taxon>Frankia</taxon>
    </lineage>
</organism>
<protein>
    <recommendedName>
        <fullName evidence="1">Ketol-acid reductoisomerase (NADP(+))</fullName>
        <shortName evidence="1">KARI</shortName>
        <ecNumber evidence="1">1.1.1.86</ecNumber>
    </recommendedName>
    <alternativeName>
        <fullName evidence="1">Acetohydroxy-acid isomeroreductase</fullName>
        <shortName evidence="1">AHIR</shortName>
    </alternativeName>
    <alternativeName>
        <fullName evidence="1">Alpha-keto-beta-hydroxylacyl reductoisomerase</fullName>
    </alternativeName>
    <alternativeName>
        <fullName evidence="1">Ketol-acid reductoisomerase type 1</fullName>
    </alternativeName>
    <alternativeName>
        <fullName evidence="1">Ketol-acid reductoisomerase type I</fullName>
    </alternativeName>
</protein>
<accession>Q0RDI8</accession>